<proteinExistence type="inferred from homology"/>
<keyword id="KW-0535">Nitrogen fixation</keyword>
<accession>P46037</accession>
<reference key="1">
    <citation type="journal article" date="1994" name="J. Bacteriol.">
        <title>Characterization of the genome region encoding an fdxH-type ferredoxin and a new 2[4Fe-4S] ferredoxin from the nonheterocystous, nitrogen-fixing cyanobacterium Plectonema boryanum PCC 73110.</title>
        <authorList>
            <person name="Schrautemeier B."/>
            <person name="Cassing A."/>
            <person name="Boehme H."/>
        </authorList>
    </citation>
    <scope>NUCLEOTIDE SEQUENCE [GENOMIC DNA]</scope>
    <source>
        <strain>ATCC 18200 / UTEX 594 / PCC 73110</strain>
    </source>
</reference>
<gene>
    <name type="primary">hesA</name>
</gene>
<name>HESA_LEPBY</name>
<dbReference type="EMBL" id="X71865">
    <property type="protein sequence ID" value="CAA50696.1"/>
    <property type="molecule type" value="Genomic_DNA"/>
</dbReference>
<dbReference type="PIR" id="A49890">
    <property type="entry name" value="A49890"/>
</dbReference>
<dbReference type="PIR" id="S40167">
    <property type="entry name" value="S40167"/>
</dbReference>
<dbReference type="SMR" id="P46037"/>
<dbReference type="GO" id="GO:0005737">
    <property type="term" value="C:cytoplasm"/>
    <property type="evidence" value="ECO:0007669"/>
    <property type="project" value="TreeGrafter"/>
</dbReference>
<dbReference type="GO" id="GO:0016779">
    <property type="term" value="F:nucleotidyltransferase activity"/>
    <property type="evidence" value="ECO:0007669"/>
    <property type="project" value="TreeGrafter"/>
</dbReference>
<dbReference type="GO" id="GO:0004792">
    <property type="term" value="F:thiosulfate-cyanide sulfurtransferase activity"/>
    <property type="evidence" value="ECO:0007669"/>
    <property type="project" value="TreeGrafter"/>
</dbReference>
<dbReference type="GO" id="GO:0008641">
    <property type="term" value="F:ubiquitin-like modifier activating enzyme activity"/>
    <property type="evidence" value="ECO:0007669"/>
    <property type="project" value="InterPro"/>
</dbReference>
<dbReference type="GO" id="GO:0009399">
    <property type="term" value="P:nitrogen fixation"/>
    <property type="evidence" value="ECO:0007669"/>
    <property type="project" value="UniProtKB-KW"/>
</dbReference>
<dbReference type="CDD" id="cd00757">
    <property type="entry name" value="ThiF_MoeB_HesA_family"/>
    <property type="match status" value="1"/>
</dbReference>
<dbReference type="Gene3D" id="3.40.50.720">
    <property type="entry name" value="NAD(P)-binding Rossmann-like Domain"/>
    <property type="match status" value="1"/>
</dbReference>
<dbReference type="InterPro" id="IPR045886">
    <property type="entry name" value="ThiF/MoeB/HesA"/>
</dbReference>
<dbReference type="InterPro" id="IPR000594">
    <property type="entry name" value="ThiF_NAD_FAD-bd"/>
</dbReference>
<dbReference type="InterPro" id="IPR035985">
    <property type="entry name" value="Ubiquitin-activating_enz"/>
</dbReference>
<dbReference type="PANTHER" id="PTHR10953:SF102">
    <property type="entry name" value="ADENYLYLTRANSFERASE AND SULFURTRANSFERASE MOCS3"/>
    <property type="match status" value="1"/>
</dbReference>
<dbReference type="PANTHER" id="PTHR10953">
    <property type="entry name" value="UBIQUITIN-ACTIVATING ENZYME E1"/>
    <property type="match status" value="1"/>
</dbReference>
<dbReference type="Pfam" id="PF00899">
    <property type="entry name" value="ThiF"/>
    <property type="match status" value="1"/>
</dbReference>
<dbReference type="SUPFAM" id="SSF69572">
    <property type="entry name" value="Activating enzymes of the ubiquitin-like proteins"/>
    <property type="match status" value="1"/>
</dbReference>
<evidence type="ECO:0000305" key="1"/>
<comment type="similarity">
    <text evidence="1">Belongs to the HesA/MoeB/ThiF family.</text>
</comment>
<organism>
    <name type="scientific">Leptolyngbya boryana</name>
    <name type="common">Plectonema boryanum</name>
    <dbReference type="NCBI Taxonomy" id="1184"/>
    <lineage>
        <taxon>Bacteria</taxon>
        <taxon>Bacillati</taxon>
        <taxon>Cyanobacteriota</taxon>
        <taxon>Cyanophyceae</taxon>
        <taxon>Leptolyngbyales</taxon>
        <taxon>Leptolyngbyaceae</taxon>
        <taxon>Leptolyngbya group</taxon>
        <taxon>Leptolyngbya</taxon>
    </lineage>
</organism>
<sequence length="277" mass="31028">MLDLTPTELERYRRQMMLPGFDEDAQRRLKSFTALVTGVGGLGGTAALYLAVAGIGKLILVRGGELRLDDMNRQVLMTHDTVGQPRVFKAKETLEKINPDVEVEAVFDYITPDNVDHLVRSTDITLDCAHNFAERDLLNEACVRYRKPMVEAAMDGMEAYLTTILPGQTGCLTCLFPEKPEWDRRGFAVVGAVSGTLACLAALEAIKLITGFEKPLVSELLTMNLGRLEFAKRRIYRDPHCPVCGNHAPWRQHVSRSLESQLRDLDVDRIFNLSRPI</sequence>
<feature type="chain" id="PRO_0000120573" description="Protein HesA">
    <location>
        <begin position="1"/>
        <end position="277"/>
    </location>
</feature>
<protein>
    <recommendedName>
        <fullName>Protein HesA</fullName>
    </recommendedName>
</protein>